<sequence>MSETQNTQVAKRQRTLVGKVVSNKMDKTVVVLVERRVKHPIFGKIIMRSAKYKAHDESNQYNEGDTVEIAEGRPISRSKAWRVVRLVEAARVI</sequence>
<dbReference type="EMBL" id="BX640422">
    <property type="protein sequence ID" value="CAE43880.1"/>
    <property type="molecule type" value="Genomic_DNA"/>
</dbReference>
<dbReference type="RefSeq" id="NP_882132.1">
    <property type="nucleotide sequence ID" value="NC_002929.2"/>
</dbReference>
<dbReference type="RefSeq" id="WP_003806913.1">
    <property type="nucleotide sequence ID" value="NZ_CP039022.1"/>
</dbReference>
<dbReference type="SMR" id="Q7VTC4"/>
<dbReference type="STRING" id="257313.BP3622"/>
<dbReference type="PaxDb" id="257313-BP3622"/>
<dbReference type="GeneID" id="93206267"/>
<dbReference type="KEGG" id="bpe:BP3622"/>
<dbReference type="PATRIC" id="fig|257313.5.peg.3920"/>
<dbReference type="eggNOG" id="COG0186">
    <property type="taxonomic scope" value="Bacteria"/>
</dbReference>
<dbReference type="HOGENOM" id="CLU_073626_1_1_4"/>
<dbReference type="Proteomes" id="UP000002676">
    <property type="component" value="Chromosome"/>
</dbReference>
<dbReference type="GO" id="GO:0022627">
    <property type="term" value="C:cytosolic small ribosomal subunit"/>
    <property type="evidence" value="ECO:0007669"/>
    <property type="project" value="TreeGrafter"/>
</dbReference>
<dbReference type="GO" id="GO:0019843">
    <property type="term" value="F:rRNA binding"/>
    <property type="evidence" value="ECO:0007669"/>
    <property type="project" value="UniProtKB-UniRule"/>
</dbReference>
<dbReference type="GO" id="GO:0003735">
    <property type="term" value="F:structural constituent of ribosome"/>
    <property type="evidence" value="ECO:0007669"/>
    <property type="project" value="InterPro"/>
</dbReference>
<dbReference type="GO" id="GO:0006412">
    <property type="term" value="P:translation"/>
    <property type="evidence" value="ECO:0007669"/>
    <property type="project" value="UniProtKB-UniRule"/>
</dbReference>
<dbReference type="CDD" id="cd00364">
    <property type="entry name" value="Ribosomal_uS17"/>
    <property type="match status" value="1"/>
</dbReference>
<dbReference type="Gene3D" id="2.40.50.140">
    <property type="entry name" value="Nucleic acid-binding proteins"/>
    <property type="match status" value="1"/>
</dbReference>
<dbReference type="HAMAP" id="MF_01345_B">
    <property type="entry name" value="Ribosomal_uS17_B"/>
    <property type="match status" value="1"/>
</dbReference>
<dbReference type="InterPro" id="IPR012340">
    <property type="entry name" value="NA-bd_OB-fold"/>
</dbReference>
<dbReference type="InterPro" id="IPR000266">
    <property type="entry name" value="Ribosomal_uS17"/>
</dbReference>
<dbReference type="InterPro" id="IPR019984">
    <property type="entry name" value="Ribosomal_uS17_bact/chlr"/>
</dbReference>
<dbReference type="InterPro" id="IPR019979">
    <property type="entry name" value="Ribosomal_uS17_CS"/>
</dbReference>
<dbReference type="NCBIfam" id="NF004123">
    <property type="entry name" value="PRK05610.1"/>
    <property type="match status" value="1"/>
</dbReference>
<dbReference type="NCBIfam" id="TIGR03635">
    <property type="entry name" value="uS17_bact"/>
    <property type="match status" value="1"/>
</dbReference>
<dbReference type="PANTHER" id="PTHR10744">
    <property type="entry name" value="40S RIBOSOMAL PROTEIN S11 FAMILY MEMBER"/>
    <property type="match status" value="1"/>
</dbReference>
<dbReference type="PANTHER" id="PTHR10744:SF1">
    <property type="entry name" value="SMALL RIBOSOMAL SUBUNIT PROTEIN US17M"/>
    <property type="match status" value="1"/>
</dbReference>
<dbReference type="Pfam" id="PF00366">
    <property type="entry name" value="Ribosomal_S17"/>
    <property type="match status" value="1"/>
</dbReference>
<dbReference type="PRINTS" id="PR00973">
    <property type="entry name" value="RIBOSOMALS17"/>
</dbReference>
<dbReference type="SUPFAM" id="SSF50249">
    <property type="entry name" value="Nucleic acid-binding proteins"/>
    <property type="match status" value="1"/>
</dbReference>
<dbReference type="PROSITE" id="PS00056">
    <property type="entry name" value="RIBOSOMAL_S17"/>
    <property type="match status" value="1"/>
</dbReference>
<organism>
    <name type="scientific">Bordetella pertussis (strain Tohama I / ATCC BAA-589 / NCTC 13251)</name>
    <dbReference type="NCBI Taxonomy" id="257313"/>
    <lineage>
        <taxon>Bacteria</taxon>
        <taxon>Pseudomonadati</taxon>
        <taxon>Pseudomonadota</taxon>
        <taxon>Betaproteobacteria</taxon>
        <taxon>Burkholderiales</taxon>
        <taxon>Alcaligenaceae</taxon>
        <taxon>Bordetella</taxon>
    </lineage>
</organism>
<reference key="1">
    <citation type="journal article" date="2003" name="Nat. Genet.">
        <title>Comparative analysis of the genome sequences of Bordetella pertussis, Bordetella parapertussis and Bordetella bronchiseptica.</title>
        <authorList>
            <person name="Parkhill J."/>
            <person name="Sebaihia M."/>
            <person name="Preston A."/>
            <person name="Murphy L.D."/>
            <person name="Thomson N.R."/>
            <person name="Harris D.E."/>
            <person name="Holden M.T.G."/>
            <person name="Churcher C.M."/>
            <person name="Bentley S.D."/>
            <person name="Mungall K.L."/>
            <person name="Cerdeno-Tarraga A.-M."/>
            <person name="Temple L."/>
            <person name="James K.D."/>
            <person name="Harris B."/>
            <person name="Quail M.A."/>
            <person name="Achtman M."/>
            <person name="Atkin R."/>
            <person name="Baker S."/>
            <person name="Basham D."/>
            <person name="Bason N."/>
            <person name="Cherevach I."/>
            <person name="Chillingworth T."/>
            <person name="Collins M."/>
            <person name="Cronin A."/>
            <person name="Davis P."/>
            <person name="Doggett J."/>
            <person name="Feltwell T."/>
            <person name="Goble A."/>
            <person name="Hamlin N."/>
            <person name="Hauser H."/>
            <person name="Holroyd S."/>
            <person name="Jagels K."/>
            <person name="Leather S."/>
            <person name="Moule S."/>
            <person name="Norberczak H."/>
            <person name="O'Neil S."/>
            <person name="Ormond D."/>
            <person name="Price C."/>
            <person name="Rabbinowitsch E."/>
            <person name="Rutter S."/>
            <person name="Sanders M."/>
            <person name="Saunders D."/>
            <person name="Seeger K."/>
            <person name="Sharp S."/>
            <person name="Simmonds M."/>
            <person name="Skelton J."/>
            <person name="Squares R."/>
            <person name="Squares S."/>
            <person name="Stevens K."/>
            <person name="Unwin L."/>
            <person name="Whitehead S."/>
            <person name="Barrell B.G."/>
            <person name="Maskell D.J."/>
        </authorList>
    </citation>
    <scope>NUCLEOTIDE SEQUENCE [LARGE SCALE GENOMIC DNA]</scope>
    <source>
        <strain>Tohama I / ATCC BAA-589 / NCTC 13251</strain>
    </source>
</reference>
<accession>Q7VTC4</accession>
<keyword id="KW-1185">Reference proteome</keyword>
<keyword id="KW-0687">Ribonucleoprotein</keyword>
<keyword id="KW-0689">Ribosomal protein</keyword>
<keyword id="KW-0694">RNA-binding</keyword>
<keyword id="KW-0699">rRNA-binding</keyword>
<feature type="chain" id="PRO_0000233438" description="Small ribosomal subunit protein uS17">
    <location>
        <begin position="1"/>
        <end position="93"/>
    </location>
</feature>
<proteinExistence type="inferred from homology"/>
<protein>
    <recommendedName>
        <fullName evidence="1">Small ribosomal subunit protein uS17</fullName>
    </recommendedName>
    <alternativeName>
        <fullName evidence="2">30S ribosomal protein S17</fullName>
    </alternativeName>
</protein>
<gene>
    <name evidence="1" type="primary">rpsQ</name>
    <name type="ordered locus">BP3622</name>
</gene>
<evidence type="ECO:0000255" key="1">
    <source>
        <dbReference type="HAMAP-Rule" id="MF_01345"/>
    </source>
</evidence>
<evidence type="ECO:0000305" key="2"/>
<name>RS17_BORPE</name>
<comment type="function">
    <text evidence="1">One of the primary rRNA binding proteins, it binds specifically to the 5'-end of 16S ribosomal RNA.</text>
</comment>
<comment type="subunit">
    <text evidence="1">Part of the 30S ribosomal subunit.</text>
</comment>
<comment type="similarity">
    <text evidence="1">Belongs to the universal ribosomal protein uS17 family.</text>
</comment>